<accession>P54254</accession>
<accession>Q8C866</accession>
<proteinExistence type="evidence at protein level"/>
<keyword id="KW-0963">Cytoplasm</keyword>
<keyword id="KW-0238">DNA-binding</keyword>
<keyword id="KW-1017">Isopeptide bond</keyword>
<keyword id="KW-0539">Nucleus</keyword>
<keyword id="KW-0597">Phosphoprotein</keyword>
<keyword id="KW-1185">Reference proteome</keyword>
<keyword id="KW-0678">Repressor</keyword>
<keyword id="KW-0694">RNA-binding</keyword>
<keyword id="KW-0804">Transcription</keyword>
<keyword id="KW-0805">Transcription regulation</keyword>
<keyword id="KW-0832">Ubl conjugation</keyword>
<evidence type="ECO:0000250" key="1">
    <source>
        <dbReference type="UniProtKB" id="P54253"/>
    </source>
</evidence>
<evidence type="ECO:0000255" key="2">
    <source>
        <dbReference type="PROSITE-ProRule" id="PRU00496"/>
    </source>
</evidence>
<evidence type="ECO:0000256" key="3">
    <source>
        <dbReference type="SAM" id="MobiDB-lite"/>
    </source>
</evidence>
<evidence type="ECO:0000269" key="4">
    <source>
    </source>
</evidence>
<evidence type="ECO:0000269" key="5">
    <source>
    </source>
</evidence>
<evidence type="ECO:0000269" key="6">
    <source>
    </source>
</evidence>
<evidence type="ECO:0000269" key="7">
    <source>
    </source>
</evidence>
<evidence type="ECO:0000269" key="8">
    <source>
    </source>
</evidence>
<evidence type="ECO:0000269" key="9">
    <source>
    </source>
</evidence>
<evidence type="ECO:0000269" key="10">
    <source>
    </source>
</evidence>
<evidence type="ECO:0000269" key="11">
    <source>
    </source>
</evidence>
<evidence type="ECO:0000269" key="12">
    <source>
    </source>
</evidence>
<evidence type="ECO:0000305" key="13"/>
<evidence type="ECO:0007744" key="14">
    <source>
    </source>
</evidence>
<feature type="chain" id="PRO_0000064752" description="Ataxin-1">
    <location>
        <begin position="1"/>
        <end position="791"/>
    </location>
</feature>
<feature type="domain" description="AXH" evidence="2">
    <location>
        <begin position="538"/>
        <end position="669"/>
    </location>
</feature>
<feature type="region of interest" description="Disordered" evidence="3">
    <location>
        <begin position="1"/>
        <end position="36"/>
    </location>
</feature>
<feature type="region of interest" description="Disordered" evidence="3">
    <location>
        <begin position="187"/>
        <end position="240"/>
    </location>
</feature>
<feature type="region of interest" description="Disordered" evidence="3">
    <location>
        <begin position="298"/>
        <end position="402"/>
    </location>
</feature>
<feature type="region of interest" description="Self-association" evidence="1">
    <location>
        <begin position="470"/>
        <end position="580"/>
    </location>
</feature>
<feature type="region of interest" description="Interaction with USP7" evidence="1">
    <location>
        <begin position="514"/>
        <end position="791"/>
    </location>
</feature>
<feature type="region of interest" description="RNA-binding" evidence="1">
    <location>
        <begin position="516"/>
        <end position="742"/>
    </location>
</feature>
<feature type="region of interest" description="Disordered" evidence="3">
    <location>
        <begin position="736"/>
        <end position="774"/>
    </location>
</feature>
<feature type="short sequence motif" description="Nuclear localization signal" evidence="12">
    <location>
        <begin position="770"/>
        <end position="773"/>
    </location>
</feature>
<feature type="compositionally biased region" description="Basic and acidic residues" evidence="3">
    <location>
        <begin position="1"/>
        <end position="30"/>
    </location>
</feature>
<feature type="compositionally biased region" description="Polar residues" evidence="3">
    <location>
        <begin position="219"/>
        <end position="236"/>
    </location>
</feature>
<feature type="compositionally biased region" description="Polar residues" evidence="3">
    <location>
        <begin position="312"/>
        <end position="327"/>
    </location>
</feature>
<feature type="compositionally biased region" description="Polar residues" evidence="3">
    <location>
        <begin position="362"/>
        <end position="388"/>
    </location>
</feature>
<feature type="modified residue" description="Phosphoserine" evidence="14">
    <location>
        <position position="81"/>
    </location>
</feature>
<feature type="modified residue" description="Phosphoserine" evidence="14">
    <location>
        <position position="87"/>
    </location>
</feature>
<feature type="modified residue" description="Phosphoserine" evidence="14">
    <location>
        <position position="213"/>
    </location>
</feature>
<feature type="modified residue" description="Phosphothreonine" evidence="14">
    <location>
        <position position="218"/>
    </location>
</feature>
<feature type="modified residue" description="Phosphoserine" evidence="14">
    <location>
        <position position="229"/>
    </location>
</feature>
<feature type="modified residue" description="Phosphoserine" evidence="1">
    <location>
        <position position="751"/>
    </location>
</feature>
<feature type="cross-link" description="Glycyl lysine isopeptide (Lys-Gly) (interchain with G-Cter in SUMO)" evidence="1">
    <location>
        <position position="16"/>
    </location>
</feature>
<feature type="cross-link" description="Glycyl lysine isopeptide (Lys-Gly) (interchain with G-Cter in SUMO)" evidence="1">
    <location>
        <position position="193"/>
    </location>
</feature>
<feature type="cross-link" description="Glycyl lysine isopeptide (Lys-Gly) (interchain with G-Cter in SUMO)" evidence="1">
    <location>
        <position position="585"/>
    </location>
</feature>
<feature type="cross-link" description="Glycyl lysine isopeptide (Lys-Gly) (interchain with G-Cter in SUMO)" evidence="1">
    <location>
        <position position="672"/>
    </location>
</feature>
<feature type="cross-link" description="Glycyl lysine isopeptide (Lys-Gly) (interchain with G-Cter in SUMO)" evidence="1">
    <location>
        <position position="721"/>
    </location>
</feature>
<feature type="mutagenesis site" description="Abolishes nuclear localization. Inhibits development of ataxia." evidence="12">
    <original>K</original>
    <variation>T</variation>
    <location>
        <position position="771"/>
    </location>
</feature>
<feature type="sequence conflict" description="In Ref. 1; CAA58533." evidence="13" ref="1">
    <original>S</original>
    <variation>T</variation>
    <location>
        <position position="8"/>
    </location>
</feature>
<feature type="sequence conflict" description="In Ref. 1; CAA58533." evidence="13" ref="1">
    <original>H</original>
    <variation>L</variation>
    <location>
        <position position="77"/>
    </location>
</feature>
<feature type="sequence conflict" description="In Ref. 1; CAA58533." evidence="13" ref="1">
    <original>HLG</original>
    <variation>APR</variation>
    <location>
        <begin position="393"/>
        <end position="395"/>
    </location>
</feature>
<feature type="sequence conflict" description="In Ref. 1; CAA58533." evidence="13" ref="1">
    <original>T</original>
    <variation>M</variation>
    <location>
        <position position="477"/>
    </location>
</feature>
<feature type="sequence conflict" description="In Ref. 1; CAA58533." evidence="13" ref="1">
    <original>A</original>
    <variation>S</variation>
    <location>
        <position position="519"/>
    </location>
</feature>
<feature type="sequence conflict" description="In Ref. 1; CAA58533." evidence="13" ref="1">
    <original>D</original>
    <variation>H</variation>
    <location>
        <position position="587"/>
    </location>
</feature>
<feature type="sequence conflict" description="In Ref. 1; CAA58533." evidence="13" ref="1">
    <original>A</original>
    <variation>V</variation>
    <location>
        <position position="687"/>
    </location>
</feature>
<feature type="sequence conflict" description="In Ref. 1; CAA58533." evidence="13" ref="1">
    <original>R</original>
    <variation>RR</variation>
    <location>
        <position position="749"/>
    </location>
</feature>
<sequence length="791" mass="83793">MKSNQERSNECLPPKKREIPATSRPSEEKATALPSDNHCVEGVAWLPSTPGIRGHGGGRHGSAGTSGEHGLQGMGLHKALSAGLDYSPPSAPRSVPTANTLPTVYPPPQSGTPVSPVQYAHLSHTFQFIGSSQYSGPYAGFIPSQLISPSGNPVTSAVASAAGATTPSQRSQLEAYSTLLANMGSLSQAPGHKVEPPPQQHLSRAAGLVNPGSPPPPTQQNQYIHISSSPQSSGRATSPPPIPVHLHPHQTMIPHTLTLGPSSQVVVQYSDAGGHFVPRESTKKAESSRLQQAMQAKEVLNGEMEKSRRYGASSSVELSLGKASSKSVPHPYESRHVVVHPSPADYSSRDTSGVRGSVMVLPNSSTPSADLEAQQTTHREASPSTLNDKSGLHLGKPGHRSYALSPHTVIQTTHSASEPLPVGLPATAFYAGTQPPVIGYLSGQQQAITYAGGLPQHLVIPGNQPLLIPVGSPDMDTPGAASAIVTSSPQFAAVPHTFVTTALPKSENFNPEALVTQAAYPAMVQAQIHLPVVQSVASPTTASPTLPPYFMKGSIIQLANGELKKVEDLKTEDFIQSAEISNDLKIDSSTVERIEESHSPGVAVIQFAVGEHRAQVSVEVLVEYPFFVFGQGWSSCCPERTSQLFDLPCSKLSVGDVCISLTLKNLKNGSVKKGQPVDPASVLLKQAKTDSLAGSRHRYAEQENGINQGSAQVLSENGELKFPEKIGLPAAPFLSKIEPSKPTATRKRRWSAPETRKLEKSEDEPPLTLPKPSLIPQEVKICIEGRSNVGK</sequence>
<comment type="function">
    <text evidence="1 9">Chromatin-binding factor that repress Notch signaling in the absence of Notch intracellular domain by acting as a CBF1 corepressor. Binds to the HEY promoter and might assist, along with NCOR2, RBPJ-mediated repression (By similarity). May be involved in RNA metabolism (By similarity). In concert with CIC and ATXN1L, involved in brain development (PubMed:28288114).</text>
</comment>
<comment type="subunit">
    <text evidence="1 6 7 9 11">Homooligomer (By similarity). Interacts with PQBP1, UBQLN4 and USP7 (By similarity). Interacts with ANP32A (PubMed:9353121). Interacts with CIC (PubMed:17190598). Directly interacts with RBPJ; this interaction is disrupted in the presence of Notch intracellular domain. Interacts with ATXN1L; competes with ATXN1L for RBPJ-binding (PubMed:17322884). Found in a complex with CIC and ATXN1L (PubMed:28288114).</text>
</comment>
<comment type="interaction">
    <interactant intactId="EBI-1169713">
        <id>P54254</id>
    </interactant>
    <interactant intactId="EBI-8412165">
        <id>Q924A2</id>
        <label>Cic</label>
    </interactant>
    <organismsDiffer>false</organismsDiffer>
    <experiments>2</experiments>
</comment>
<comment type="interaction">
    <interactant intactId="EBI-1169713">
        <id>P54254</id>
    </interactant>
    <interactant intactId="EBI-1169948">
        <id>Q8CHK4</id>
        <label>Kat5</label>
    </interactant>
    <organismsDiffer>false</organismsDiffer>
    <experiments>2</experiments>
</comment>
<comment type="interaction">
    <interactant intactId="EBI-1169713">
        <id>P54254</id>
    </interactant>
    <interactant intactId="EBI-1169722">
        <id>P51448</id>
        <label>Rora</label>
    </interactant>
    <organismsDiffer>false</organismsDiffer>
    <experiments>3</experiments>
</comment>
<comment type="subcellular location">
    <subcellularLocation>
        <location evidence="1">Cytoplasm</location>
    </subcellularLocation>
    <subcellularLocation>
        <location evidence="12">Nucleus</location>
    </subcellularLocation>
    <text evidence="1">Colocalizes with USP7 in the nucleus.</text>
</comment>
<comment type="tissue specificity">
    <text evidence="9 10">Expressed in the cortex and hypothalamus (at protein level). Widely expressed. In brain, the pattern of distribution is limited to neuron populations.</text>
</comment>
<comment type="developmental stage">
    <text evidence="10">Transient expression burst in Purkinje cells as the cerebellar cortex becomes functional (postnatal day 14), and in mesenchymal cells of the developing intervertebral disks of the spinal column.</text>
</comment>
<comment type="induction">
    <text evidence="8">Atxn1 protein levels are directly regulated by Pum1 protein: Pum1 acts by binding to the 3'-UTR of Atxn1 mRNA, affecting Atxn1 mRNA stability and leading to reduced Atxn1 protein levels.</text>
</comment>
<comment type="domain">
    <text evidence="6">The AXH domain is required for interaction with CIC.</text>
</comment>
<comment type="PTM">
    <text evidence="4">Ubiquitinated by UBE3A, leading to its degradation by the proteasome. The presence of poly-Gln repeats in trangenic models developed to replicate phenotypes of the spinocerebellar ataxia 1 disease (SCA1) impair ubiquitination and degradation, leading to accumulation of Atxn1 in neurons and subsequent toxicity.</text>
</comment>
<comment type="PTM">
    <text evidence="1">Sumoylation is dependent on nuclear localization and phosphorylation at Ser-751.</text>
</comment>
<comment type="polymorphism">
    <text evidence="4 5">The murine poly-Gln region is very limited in comparison to human ATXN1 and is not polymorphic.</text>
</comment>
<comment type="disruption phenotype">
    <text evidence="9">Mice with conditional knockouts of either ATXN1-ATXN1L or CIC in the developing forebrain exhibit intellectual disability, hyperactivity, social-behavioral deficits and reduced thickness of upper cortical layers.</text>
</comment>
<comment type="miscellaneous">
    <text evidence="4 5 8">Different transgenic mouse, containing a poly-Gln region insertion in position 199 have been developed to replicate phenotypes of the spinocerebellar ataxia 1 disease (SCA1) in human (PubMed:10624951, PubMed:12086639). Heterozygous mice with a poly-Gln of 92 residues [92Q] develop the ataxia typical of human SCA1. However, they show only the phenotype associated with dysfunctional Purkinje cells and usually live a normal lifespan (PubMed:10624951). Heterozygous mice with a poly-Gln of 154 residues [154Q] develop a progressive neurological disorder that resembles human SCA1, with motor incoordination, cognitive deficits, wasting, and premature death, accompanied by Purkinje cell loss and age-related hippocampal synaptic dysfunction (PubMed:12086639). Phenotypes are caused by an accumulation of Atxn1 in neurons, exerting toxicity. The expanded poly-Gln tract causes stabilization of Atxn1 and impairs its ubiquitination and subsequent degradation, increasing its abundance in neurons (PubMed:10624951).</text>
</comment>
<comment type="similarity">
    <text evidence="13">Belongs to the ATXN1 family.</text>
</comment>
<reference key="1">
    <citation type="journal article" date="1996" name="Hum. Mol. Genet.">
        <title>Cloning and developmental expression analysis of the murine homolog of the spinocerebellar ataxia type 1 gene (Sca1).</title>
        <authorList>
            <person name="Banfi S."/>
            <person name="Servadio A."/>
            <person name="Chung M.-Y."/>
            <person name="Capozzoli F."/>
            <person name="Duvick L.A."/>
            <person name="Elde R."/>
            <person name="Zoghbi H.Y."/>
            <person name="Orr H.T."/>
        </authorList>
    </citation>
    <scope>NUCLEOTIDE SEQUENCE [MRNA]</scope>
    <scope>TISSUE SPECIFICITY</scope>
    <scope>DEVELOPMENTAL STAGE</scope>
    <source>
        <strain>C57BL/6 X CBA</strain>
        <tissue>Brain</tissue>
        <tissue>Retina</tissue>
        <tissue>Thymus</tissue>
    </source>
</reference>
<reference key="2">
    <citation type="journal article" date="2005" name="Science">
        <title>The transcriptional landscape of the mammalian genome.</title>
        <authorList>
            <person name="Carninci P."/>
            <person name="Kasukawa T."/>
            <person name="Katayama S."/>
            <person name="Gough J."/>
            <person name="Frith M.C."/>
            <person name="Maeda N."/>
            <person name="Oyama R."/>
            <person name="Ravasi T."/>
            <person name="Lenhard B."/>
            <person name="Wells C."/>
            <person name="Kodzius R."/>
            <person name="Shimokawa K."/>
            <person name="Bajic V.B."/>
            <person name="Brenner S.E."/>
            <person name="Batalov S."/>
            <person name="Forrest A.R."/>
            <person name="Zavolan M."/>
            <person name="Davis M.J."/>
            <person name="Wilming L.G."/>
            <person name="Aidinis V."/>
            <person name="Allen J.E."/>
            <person name="Ambesi-Impiombato A."/>
            <person name="Apweiler R."/>
            <person name="Aturaliya R.N."/>
            <person name="Bailey T.L."/>
            <person name="Bansal M."/>
            <person name="Baxter L."/>
            <person name="Beisel K.W."/>
            <person name="Bersano T."/>
            <person name="Bono H."/>
            <person name="Chalk A.M."/>
            <person name="Chiu K.P."/>
            <person name="Choudhary V."/>
            <person name="Christoffels A."/>
            <person name="Clutterbuck D.R."/>
            <person name="Crowe M.L."/>
            <person name="Dalla E."/>
            <person name="Dalrymple B.P."/>
            <person name="de Bono B."/>
            <person name="Della Gatta G."/>
            <person name="di Bernardo D."/>
            <person name="Down T."/>
            <person name="Engstrom P."/>
            <person name="Fagiolini M."/>
            <person name="Faulkner G."/>
            <person name="Fletcher C.F."/>
            <person name="Fukushima T."/>
            <person name="Furuno M."/>
            <person name="Futaki S."/>
            <person name="Gariboldi M."/>
            <person name="Georgii-Hemming P."/>
            <person name="Gingeras T.R."/>
            <person name="Gojobori T."/>
            <person name="Green R.E."/>
            <person name="Gustincich S."/>
            <person name="Harbers M."/>
            <person name="Hayashi Y."/>
            <person name="Hensch T.K."/>
            <person name="Hirokawa N."/>
            <person name="Hill D."/>
            <person name="Huminiecki L."/>
            <person name="Iacono M."/>
            <person name="Ikeo K."/>
            <person name="Iwama A."/>
            <person name="Ishikawa T."/>
            <person name="Jakt M."/>
            <person name="Kanapin A."/>
            <person name="Katoh M."/>
            <person name="Kawasawa Y."/>
            <person name="Kelso J."/>
            <person name="Kitamura H."/>
            <person name="Kitano H."/>
            <person name="Kollias G."/>
            <person name="Krishnan S.P."/>
            <person name="Kruger A."/>
            <person name="Kummerfeld S.K."/>
            <person name="Kurochkin I.V."/>
            <person name="Lareau L.F."/>
            <person name="Lazarevic D."/>
            <person name="Lipovich L."/>
            <person name="Liu J."/>
            <person name="Liuni S."/>
            <person name="McWilliam S."/>
            <person name="Madan Babu M."/>
            <person name="Madera M."/>
            <person name="Marchionni L."/>
            <person name="Matsuda H."/>
            <person name="Matsuzawa S."/>
            <person name="Miki H."/>
            <person name="Mignone F."/>
            <person name="Miyake S."/>
            <person name="Morris K."/>
            <person name="Mottagui-Tabar S."/>
            <person name="Mulder N."/>
            <person name="Nakano N."/>
            <person name="Nakauchi H."/>
            <person name="Ng P."/>
            <person name="Nilsson R."/>
            <person name="Nishiguchi S."/>
            <person name="Nishikawa S."/>
            <person name="Nori F."/>
            <person name="Ohara O."/>
            <person name="Okazaki Y."/>
            <person name="Orlando V."/>
            <person name="Pang K.C."/>
            <person name="Pavan W.J."/>
            <person name="Pavesi G."/>
            <person name="Pesole G."/>
            <person name="Petrovsky N."/>
            <person name="Piazza S."/>
            <person name="Reed J."/>
            <person name="Reid J.F."/>
            <person name="Ring B.Z."/>
            <person name="Ringwald M."/>
            <person name="Rost B."/>
            <person name="Ruan Y."/>
            <person name="Salzberg S.L."/>
            <person name="Sandelin A."/>
            <person name="Schneider C."/>
            <person name="Schoenbach C."/>
            <person name="Sekiguchi K."/>
            <person name="Semple C.A."/>
            <person name="Seno S."/>
            <person name="Sessa L."/>
            <person name="Sheng Y."/>
            <person name="Shibata Y."/>
            <person name="Shimada H."/>
            <person name="Shimada K."/>
            <person name="Silva D."/>
            <person name="Sinclair B."/>
            <person name="Sperling S."/>
            <person name="Stupka E."/>
            <person name="Sugiura K."/>
            <person name="Sultana R."/>
            <person name="Takenaka Y."/>
            <person name="Taki K."/>
            <person name="Tammoja K."/>
            <person name="Tan S.L."/>
            <person name="Tang S."/>
            <person name="Taylor M.S."/>
            <person name="Tegner J."/>
            <person name="Teichmann S.A."/>
            <person name="Ueda H.R."/>
            <person name="van Nimwegen E."/>
            <person name="Verardo R."/>
            <person name="Wei C.L."/>
            <person name="Yagi K."/>
            <person name="Yamanishi H."/>
            <person name="Zabarovsky E."/>
            <person name="Zhu S."/>
            <person name="Zimmer A."/>
            <person name="Hide W."/>
            <person name="Bult C."/>
            <person name="Grimmond S.M."/>
            <person name="Teasdale R.D."/>
            <person name="Liu E.T."/>
            <person name="Brusic V."/>
            <person name="Quackenbush J."/>
            <person name="Wahlestedt C."/>
            <person name="Mattick J.S."/>
            <person name="Hume D.A."/>
            <person name="Kai C."/>
            <person name="Sasaki D."/>
            <person name="Tomaru Y."/>
            <person name="Fukuda S."/>
            <person name="Kanamori-Katayama M."/>
            <person name="Suzuki M."/>
            <person name="Aoki J."/>
            <person name="Arakawa T."/>
            <person name="Iida J."/>
            <person name="Imamura K."/>
            <person name="Itoh M."/>
            <person name="Kato T."/>
            <person name="Kawaji H."/>
            <person name="Kawagashira N."/>
            <person name="Kawashima T."/>
            <person name="Kojima M."/>
            <person name="Kondo S."/>
            <person name="Konno H."/>
            <person name="Nakano K."/>
            <person name="Ninomiya N."/>
            <person name="Nishio T."/>
            <person name="Okada M."/>
            <person name="Plessy C."/>
            <person name="Shibata K."/>
            <person name="Shiraki T."/>
            <person name="Suzuki S."/>
            <person name="Tagami M."/>
            <person name="Waki K."/>
            <person name="Watahiki A."/>
            <person name="Okamura-Oho Y."/>
            <person name="Suzuki H."/>
            <person name="Kawai J."/>
            <person name="Hayashizaki Y."/>
        </authorList>
    </citation>
    <scope>NUCLEOTIDE SEQUENCE [LARGE SCALE MRNA]</scope>
    <source>
        <strain>C57BL/6J</strain>
        <tissue>Embryonic head</tissue>
    </source>
</reference>
<reference key="3">
    <citation type="journal article" date="2004" name="Genome Res.">
        <title>The status, quality, and expansion of the NIH full-length cDNA project: the Mammalian Gene Collection (MGC).</title>
        <authorList>
            <consortium name="The MGC Project Team"/>
        </authorList>
    </citation>
    <scope>NUCLEOTIDE SEQUENCE [LARGE SCALE MRNA]</scope>
    <source>
        <strain>NMRI</strain>
        <tissue>Mammary tumor</tissue>
    </source>
</reference>
<reference key="4">
    <citation type="journal article" date="1998" name="Cell">
        <title>Ataxin-1 nuclear localization and aggregation: role in polyglutamine-induced disease in SCA1 transgenic mice.</title>
        <authorList>
            <person name="Klement I.A."/>
            <person name="Skinner P.J."/>
            <person name="Kaytor M.D."/>
            <person name="Yi H."/>
            <person name="Hersch S.M."/>
            <person name="Clark H.B."/>
            <person name="Zoghbi H.Y."/>
            <person name="Orr H.T."/>
        </authorList>
    </citation>
    <scope>SUBCELLULAR LOCATION</scope>
    <scope>MUTAGENESIS OF LYS-771</scope>
</reference>
<reference key="5">
    <citation type="journal article" date="1997" name="Nature">
        <title>The cerebellar leucine-rich acidic nuclear protein interacts with ataxin-1.</title>
        <authorList>
            <person name="Matilla A."/>
            <person name="Koshy B.T."/>
            <person name="Cummings C.J."/>
            <person name="Isobe T."/>
            <person name="Orr H.T."/>
            <person name="Zoghbi H.Y."/>
        </authorList>
    </citation>
    <scope>INTERACTION WITH ANP32A</scope>
</reference>
<reference key="6">
    <citation type="journal article" date="1999" name="Neuron">
        <title>Mutation of the E6-AP ubiquitin ligase reduces nuclear inclusion frequency while accelerating polyglutamine-induced pathology in SCA1 mice.</title>
        <authorList>
            <person name="Cummings C.J."/>
            <person name="Reinstein E."/>
            <person name="Sun Y."/>
            <person name="Antalffy B."/>
            <person name="Jiang Y."/>
            <person name="Ciechanover A."/>
            <person name="Orr H.T."/>
            <person name="Beaudet A.L."/>
            <person name="Zoghbi H.Y."/>
        </authorList>
    </citation>
    <scope>DISEASE MODEL</scope>
    <scope>UBIQUITINATION</scope>
</reference>
<reference key="7">
    <citation type="journal article" date="2002" name="Neuron">
        <title>A long CAG repeat in the mouse Sca1 locus replicates SCA1 features and reveals the impact of protein solubility on selective neurodegeneration.</title>
        <authorList>
            <person name="Watase K."/>
            <person name="Weeber E.J."/>
            <person name="Xu B."/>
            <person name="Antalffy B."/>
            <person name="Yuva-Paylor L."/>
            <person name="Hashimoto K."/>
            <person name="Kano M."/>
            <person name="Atkinson R."/>
            <person name="Sun Y."/>
            <person name="Armstrong D.L."/>
            <person name="Sweatt J.D."/>
            <person name="Orr H.T."/>
            <person name="Paylor R."/>
            <person name="Zoghbi H.Y."/>
        </authorList>
    </citation>
    <scope>DISEASE MODEL</scope>
</reference>
<reference key="8">
    <citation type="journal article" date="2006" name="Cell">
        <title>ATAXIN-1 interacts with the repressor Capicua in its native complex to cause SCA1 neuropathology.</title>
        <authorList>
            <person name="Lam Y.C."/>
            <person name="Bowman A.B."/>
            <person name="Jafar-Nejad P."/>
            <person name="Lim J."/>
            <person name="Richman R."/>
            <person name="Fryer J.D."/>
            <person name="Hyun E.D."/>
            <person name="Duvick L.A."/>
            <person name="Orr H.T."/>
            <person name="Botas J."/>
            <person name="Zoghbi H.Y."/>
        </authorList>
    </citation>
    <scope>INTERACTION WITH CIC</scope>
</reference>
<reference key="9">
    <citation type="journal article" date="2007" name="Nat. Genet.">
        <title>Duplication of Atxn1l suppresses SCA1 neuropathology by decreasing incorporation of polyglutamine-expanded ataxin-1 into native complexes.</title>
        <authorList>
            <person name="Bowman A.B."/>
            <person name="Lam Y.C."/>
            <person name="Jafar-Nejad P."/>
            <person name="Chen H.-K."/>
            <person name="Richman R."/>
            <person name="Samaco R.C."/>
            <person name="Fryer J.D."/>
            <person name="Kahle J.J."/>
            <person name="Orr H.T."/>
            <person name="Zoghbi H.Y."/>
        </authorList>
    </citation>
    <scope>INTERACTION WITH ATXN1L</scope>
</reference>
<reference key="10">
    <citation type="journal article" date="2010" name="Cell">
        <title>A tissue-specific atlas of mouse protein phosphorylation and expression.</title>
        <authorList>
            <person name="Huttlin E.L."/>
            <person name="Jedrychowski M.P."/>
            <person name="Elias J.E."/>
            <person name="Goswami T."/>
            <person name="Rad R."/>
            <person name="Beausoleil S.A."/>
            <person name="Villen J."/>
            <person name="Haas W."/>
            <person name="Sowa M.E."/>
            <person name="Gygi S.P."/>
        </authorList>
    </citation>
    <scope>PHOSPHORYLATION [LARGE SCALE ANALYSIS] AT SER-81; SER-87; SER-213; THR-218 AND SER-229</scope>
    <scope>IDENTIFICATION BY MASS SPECTROMETRY [LARGE SCALE ANALYSIS]</scope>
    <source>
        <tissue>Brain</tissue>
        <tissue>Brown adipose tissue</tissue>
        <tissue>Kidney</tissue>
        <tissue>Lung</tissue>
        <tissue>Pancreas</tissue>
        <tissue>Testis</tissue>
    </source>
</reference>
<reference key="11">
    <citation type="journal article" date="2015" name="Cell">
        <title>Pumilio1 haploinsufficiency leads to SCA1-like neurodegeneration by increasing wild-type Ataxin1 levels.</title>
        <authorList>
            <person name="Gennarino V.A."/>
            <person name="Singh R.K."/>
            <person name="White J.J."/>
            <person name="De Maio A."/>
            <person name="Han K."/>
            <person name="Kim J.Y."/>
            <person name="Jafar-Nejad P."/>
            <person name="di Ronza A."/>
            <person name="Kang H."/>
            <person name="Sayegh L.S."/>
            <person name="Cooper T.A."/>
            <person name="Orr H.T."/>
            <person name="Sillitoe R.V."/>
            <person name="Zoghbi H.Y."/>
        </authorList>
    </citation>
    <scope>DISEASE MODEL</scope>
    <scope>INDUCTION</scope>
</reference>
<reference key="12">
    <citation type="journal article" date="2017" name="Nat. Genet.">
        <title>Disruption of the ATXN1-CIC complex causes a spectrum of neurobehavioral phenotypes in mice and humans.</title>
        <authorList>
            <person name="Lu H.C."/>
            <person name="Tan Q."/>
            <person name="Rousseaux M.W."/>
            <person name="Wang W."/>
            <person name="Kim J.Y."/>
            <person name="Richman R."/>
            <person name="Wan Y.W."/>
            <person name="Yeh S.Y."/>
            <person name="Patel J.M."/>
            <person name="Liu X."/>
            <person name="Lin T."/>
            <person name="Lee Y."/>
            <person name="Fryer J.D."/>
            <person name="Han J."/>
            <person name="Chahrour M."/>
            <person name="Finnell R.H."/>
            <person name="Lei Y."/>
            <person name="Zurita-Jimenez M.E."/>
            <person name="Ahimaz P."/>
            <person name="Anyane-Yeboa K."/>
            <person name="Van Maldergem L."/>
            <person name="Lehalle D."/>
            <person name="Jean-Marcais N."/>
            <person name="Mosca-Boidron A.L."/>
            <person name="Thevenon J."/>
            <person name="Cousin M.A."/>
            <person name="Bro D.E."/>
            <person name="Lanpher B.C."/>
            <person name="Klee E.W."/>
            <person name="Alexander N."/>
            <person name="Bainbridge M.N."/>
            <person name="Orr H.T."/>
            <person name="Sillitoe R.V."/>
            <person name="Ljungberg M.C."/>
            <person name="Liu Z."/>
            <person name="Schaaf C.P."/>
            <person name="Zoghbi H.Y."/>
        </authorList>
    </citation>
    <scope>FUNCTION</scope>
    <scope>DISRUPTION PHENOTYPE</scope>
    <scope>TISSUE SPECIFICITY</scope>
    <scope>IDENTIFICATION IN A COMPLEX WITH CIC AND ATXN1L</scope>
</reference>
<gene>
    <name type="primary">Atxn1</name>
    <name type="synonym">Sca1</name>
</gene>
<protein>
    <recommendedName>
        <fullName>Ataxin-1</fullName>
    </recommendedName>
    <alternativeName>
        <fullName>Spinocerebellar ataxia type 1 protein homolog</fullName>
    </alternativeName>
</protein>
<name>ATX1_MOUSE</name>
<organism>
    <name type="scientific">Mus musculus</name>
    <name type="common">Mouse</name>
    <dbReference type="NCBI Taxonomy" id="10090"/>
    <lineage>
        <taxon>Eukaryota</taxon>
        <taxon>Metazoa</taxon>
        <taxon>Chordata</taxon>
        <taxon>Craniata</taxon>
        <taxon>Vertebrata</taxon>
        <taxon>Euteleostomi</taxon>
        <taxon>Mammalia</taxon>
        <taxon>Eutheria</taxon>
        <taxon>Euarchontoglires</taxon>
        <taxon>Glires</taxon>
        <taxon>Rodentia</taxon>
        <taxon>Myomorpha</taxon>
        <taxon>Muroidea</taxon>
        <taxon>Muridae</taxon>
        <taxon>Murinae</taxon>
        <taxon>Mus</taxon>
        <taxon>Mus</taxon>
    </lineage>
</organism>
<dbReference type="EMBL" id="X83542">
    <property type="protein sequence ID" value="CAA58533.1"/>
    <property type="molecule type" value="mRNA"/>
</dbReference>
<dbReference type="EMBL" id="AK048268">
    <property type="protein sequence ID" value="BAC33290.1"/>
    <property type="molecule type" value="mRNA"/>
</dbReference>
<dbReference type="EMBL" id="BC058178">
    <property type="protein sequence ID" value="AAH58178.1"/>
    <property type="molecule type" value="mRNA"/>
</dbReference>
<dbReference type="CCDS" id="CCDS26483.1"/>
<dbReference type="RefSeq" id="NP_001186233.1">
    <property type="nucleotide sequence ID" value="NM_001199304.1"/>
</dbReference>
<dbReference type="RefSeq" id="NP_001186234.1">
    <property type="nucleotide sequence ID" value="NM_001199305.1"/>
</dbReference>
<dbReference type="RefSeq" id="NP_033150.2">
    <property type="nucleotide sequence ID" value="NM_009124.6"/>
</dbReference>
<dbReference type="RefSeq" id="XP_011242683.1">
    <property type="nucleotide sequence ID" value="XM_011244381.4"/>
</dbReference>
<dbReference type="RefSeq" id="XP_011242685.1">
    <property type="nucleotide sequence ID" value="XM_011244383.4"/>
</dbReference>
<dbReference type="RefSeq" id="XP_011242687.1">
    <property type="nucleotide sequence ID" value="XM_011244385.4"/>
</dbReference>
<dbReference type="RefSeq" id="XP_011242688.1">
    <property type="nucleotide sequence ID" value="XM_011244386.4"/>
</dbReference>
<dbReference type="RefSeq" id="XP_011242689.1">
    <property type="nucleotide sequence ID" value="XM_011244387.4"/>
</dbReference>
<dbReference type="RefSeq" id="XP_011242690.1">
    <property type="nucleotide sequence ID" value="XM_011244388.3"/>
</dbReference>
<dbReference type="RefSeq" id="XP_011242691.1">
    <property type="nucleotide sequence ID" value="XM_011244389.4"/>
</dbReference>
<dbReference type="RefSeq" id="XP_011242692.1">
    <property type="nucleotide sequence ID" value="XM_011244390.4"/>
</dbReference>
<dbReference type="RefSeq" id="XP_011242693.1">
    <property type="nucleotide sequence ID" value="XM_011244391.4"/>
</dbReference>
<dbReference type="RefSeq" id="XP_011242694.1">
    <property type="nucleotide sequence ID" value="XM_011244392.3"/>
</dbReference>
<dbReference type="RefSeq" id="XP_011242695.1">
    <property type="nucleotide sequence ID" value="XM_011244393.1"/>
</dbReference>
<dbReference type="RefSeq" id="XP_017170951.1">
    <property type="nucleotide sequence ID" value="XM_017315462.1"/>
</dbReference>
<dbReference type="RefSeq" id="XP_017170952.1">
    <property type="nucleotide sequence ID" value="XM_017315463.3"/>
</dbReference>
<dbReference type="RefSeq" id="XP_030103070.1">
    <property type="nucleotide sequence ID" value="XM_030247210.2"/>
</dbReference>
<dbReference type="RefSeq" id="XP_030103071.1">
    <property type="nucleotide sequence ID" value="XM_030247211.2"/>
</dbReference>
<dbReference type="RefSeq" id="XP_030103072.1">
    <property type="nucleotide sequence ID" value="XM_030247212.2"/>
</dbReference>
<dbReference type="RefSeq" id="XP_030103073.1">
    <property type="nucleotide sequence ID" value="XM_030247213.2"/>
</dbReference>
<dbReference type="RefSeq" id="XP_036013836.1">
    <property type="nucleotide sequence ID" value="XM_036157943.1"/>
</dbReference>
<dbReference type="RefSeq" id="XP_036013837.1">
    <property type="nucleotide sequence ID" value="XM_036157944.1"/>
</dbReference>
<dbReference type="BMRB" id="P54254"/>
<dbReference type="SMR" id="P54254"/>
<dbReference type="BioGRID" id="203083">
    <property type="interactions" value="665"/>
</dbReference>
<dbReference type="CORUM" id="P54254"/>
<dbReference type="DIP" id="DIP-6004N"/>
<dbReference type="FunCoup" id="P54254">
    <property type="interactions" value="3227"/>
</dbReference>
<dbReference type="IntAct" id="P54254">
    <property type="interactions" value="4"/>
</dbReference>
<dbReference type="STRING" id="10090.ENSMUSP00000137439"/>
<dbReference type="GlyGen" id="P54254">
    <property type="glycosylation" value="5 sites, 1 O-linked glycan (2 sites)"/>
</dbReference>
<dbReference type="iPTMnet" id="P54254"/>
<dbReference type="PhosphoSitePlus" id="P54254"/>
<dbReference type="jPOST" id="P54254"/>
<dbReference type="PaxDb" id="10090-ENSMUSP00000137439"/>
<dbReference type="ProteomicsDB" id="277204"/>
<dbReference type="Pumba" id="P54254"/>
<dbReference type="ABCD" id="P54254">
    <property type="antibodies" value="2 sequenced antibodies"/>
</dbReference>
<dbReference type="Antibodypedia" id="1922">
    <property type="antibodies" value="818 antibodies from 43 providers"/>
</dbReference>
<dbReference type="DNASU" id="20238"/>
<dbReference type="Ensembl" id="ENSMUST00000091628.11">
    <property type="protein sequence ID" value="ENSMUSP00000089217.4"/>
    <property type="gene ID" value="ENSMUSG00000046876.17"/>
</dbReference>
<dbReference type="Ensembl" id="ENSMUST00000167708.4">
    <property type="protein sequence ID" value="ENSMUSP00000129890.3"/>
    <property type="gene ID" value="ENSMUSG00000046876.17"/>
</dbReference>
<dbReference type="GeneID" id="20238"/>
<dbReference type="KEGG" id="mmu:20238"/>
<dbReference type="UCSC" id="uc011yyv.2">
    <property type="organism name" value="mouse"/>
</dbReference>
<dbReference type="AGR" id="MGI:104783"/>
<dbReference type="CTD" id="6310"/>
<dbReference type="MGI" id="MGI:104783">
    <property type="gene designation" value="Atxn1"/>
</dbReference>
<dbReference type="VEuPathDB" id="HostDB:ENSMUSG00000046876"/>
<dbReference type="eggNOG" id="KOG4053">
    <property type="taxonomic scope" value="Eukaryota"/>
</dbReference>
<dbReference type="GeneTree" id="ENSGT00390000005939"/>
<dbReference type="InParanoid" id="P54254"/>
<dbReference type="OMA" id="HHQGGTH"/>
<dbReference type="OrthoDB" id="10000452at2759"/>
<dbReference type="PhylomeDB" id="P54254"/>
<dbReference type="BioGRID-ORCS" id="20238">
    <property type="hits" value="6 hits in 77 CRISPR screens"/>
</dbReference>
<dbReference type="CD-CODE" id="E86DA2C3">
    <property type="entry name" value="Nuclear body"/>
</dbReference>
<dbReference type="ChiTaRS" id="Atxn1">
    <property type="organism name" value="mouse"/>
</dbReference>
<dbReference type="PRO" id="PR:P54254"/>
<dbReference type="Proteomes" id="UP000000589">
    <property type="component" value="Chromosome 13"/>
</dbReference>
<dbReference type="RNAct" id="P54254">
    <property type="molecule type" value="protein"/>
</dbReference>
<dbReference type="Bgee" id="ENSMUSG00000046876">
    <property type="expression patterns" value="Expressed in dorsal striatum and 222 other cell types or tissues"/>
</dbReference>
<dbReference type="ExpressionAtlas" id="P54254">
    <property type="expression patterns" value="baseline and differential"/>
</dbReference>
<dbReference type="GO" id="GO:0005737">
    <property type="term" value="C:cytoplasm"/>
    <property type="evidence" value="ECO:0000250"/>
    <property type="project" value="UniProtKB"/>
</dbReference>
<dbReference type="GO" id="GO:0005829">
    <property type="term" value="C:cytosol"/>
    <property type="evidence" value="ECO:0007669"/>
    <property type="project" value="Ensembl"/>
</dbReference>
<dbReference type="GO" id="GO:0042405">
    <property type="term" value="C:nuclear inclusion body"/>
    <property type="evidence" value="ECO:0000314"/>
    <property type="project" value="MGI"/>
</dbReference>
<dbReference type="GO" id="GO:0016363">
    <property type="term" value="C:nuclear matrix"/>
    <property type="evidence" value="ECO:0000250"/>
    <property type="project" value="UniProtKB"/>
</dbReference>
<dbReference type="GO" id="GO:0005730">
    <property type="term" value="C:nucleolus"/>
    <property type="evidence" value="ECO:0007669"/>
    <property type="project" value="Ensembl"/>
</dbReference>
<dbReference type="GO" id="GO:0005654">
    <property type="term" value="C:nucleoplasm"/>
    <property type="evidence" value="ECO:0000250"/>
    <property type="project" value="UniProtKB"/>
</dbReference>
<dbReference type="GO" id="GO:0005634">
    <property type="term" value="C:nucleus"/>
    <property type="evidence" value="ECO:0000314"/>
    <property type="project" value="MGI"/>
</dbReference>
<dbReference type="GO" id="GO:0098794">
    <property type="term" value="C:postsynapse"/>
    <property type="evidence" value="ECO:0007669"/>
    <property type="project" value="GOC"/>
</dbReference>
<dbReference type="GO" id="GO:0032991">
    <property type="term" value="C:protein-containing complex"/>
    <property type="evidence" value="ECO:0000314"/>
    <property type="project" value="MGI"/>
</dbReference>
<dbReference type="GO" id="GO:0003682">
    <property type="term" value="F:chromatin binding"/>
    <property type="evidence" value="ECO:0000314"/>
    <property type="project" value="MGI"/>
</dbReference>
<dbReference type="GO" id="GO:0003677">
    <property type="term" value="F:DNA binding"/>
    <property type="evidence" value="ECO:0007669"/>
    <property type="project" value="UniProtKB-KW"/>
</dbReference>
<dbReference type="GO" id="GO:0042802">
    <property type="term" value="F:identical protein binding"/>
    <property type="evidence" value="ECO:0007669"/>
    <property type="project" value="Ensembl"/>
</dbReference>
<dbReference type="GO" id="GO:0034046">
    <property type="term" value="F:poly(G) binding"/>
    <property type="evidence" value="ECO:0000250"/>
    <property type="project" value="UniProtKB"/>
</dbReference>
<dbReference type="GO" id="GO:0008266">
    <property type="term" value="F:poly(U) RNA binding"/>
    <property type="evidence" value="ECO:0000250"/>
    <property type="project" value="UniProtKB"/>
</dbReference>
<dbReference type="GO" id="GO:0031208">
    <property type="term" value="F:POZ domain binding"/>
    <property type="evidence" value="ECO:0000353"/>
    <property type="project" value="MGI"/>
</dbReference>
<dbReference type="GO" id="GO:0003723">
    <property type="term" value="F:RNA binding"/>
    <property type="evidence" value="ECO:0000314"/>
    <property type="project" value="MGI"/>
</dbReference>
<dbReference type="GO" id="GO:0008344">
    <property type="term" value="P:adult locomotory behavior"/>
    <property type="evidence" value="ECO:0000315"/>
    <property type="project" value="MGI"/>
</dbReference>
<dbReference type="GO" id="GO:0007420">
    <property type="term" value="P:brain development"/>
    <property type="evidence" value="ECO:0000315"/>
    <property type="project" value="UniProtKB"/>
</dbReference>
<dbReference type="GO" id="GO:0060079">
    <property type="term" value="P:excitatory postsynaptic potential"/>
    <property type="evidence" value="ECO:0000315"/>
    <property type="project" value="MGI"/>
</dbReference>
<dbReference type="GO" id="GO:0048009">
    <property type="term" value="P:insulin-like growth factor receptor signaling pathway"/>
    <property type="evidence" value="ECO:0000315"/>
    <property type="project" value="MGI"/>
</dbReference>
<dbReference type="GO" id="GO:0007612">
    <property type="term" value="P:learning"/>
    <property type="evidence" value="ECO:0000315"/>
    <property type="project" value="UniProtKB"/>
</dbReference>
<dbReference type="GO" id="GO:0048286">
    <property type="term" value="P:lung alveolus development"/>
    <property type="evidence" value="ECO:0000316"/>
    <property type="project" value="MGI"/>
</dbReference>
<dbReference type="GO" id="GO:0007613">
    <property type="term" value="P:memory"/>
    <property type="evidence" value="ECO:0000315"/>
    <property type="project" value="UniProtKB"/>
</dbReference>
<dbReference type="GO" id="GO:0045892">
    <property type="term" value="P:negative regulation of DNA-templated transcription"/>
    <property type="evidence" value="ECO:0000250"/>
    <property type="project" value="UniProtKB"/>
</dbReference>
<dbReference type="GO" id="GO:0043569">
    <property type="term" value="P:negative regulation of insulin-like growth factor receptor signaling pathway"/>
    <property type="evidence" value="ECO:0000315"/>
    <property type="project" value="MGI"/>
</dbReference>
<dbReference type="GO" id="GO:0000122">
    <property type="term" value="P:negative regulation of transcription by RNA polymerase II"/>
    <property type="evidence" value="ECO:0000316"/>
    <property type="project" value="MGI"/>
</dbReference>
<dbReference type="GO" id="GO:0051168">
    <property type="term" value="P:nuclear export"/>
    <property type="evidence" value="ECO:0000250"/>
    <property type="project" value="UniProtKB"/>
</dbReference>
<dbReference type="GO" id="GO:0060252">
    <property type="term" value="P:positive regulation of glial cell proliferation"/>
    <property type="evidence" value="ECO:0000315"/>
    <property type="project" value="MGI"/>
</dbReference>
<dbReference type="GO" id="GO:0045944">
    <property type="term" value="P:positive regulation of transcription by RNA polymerase II"/>
    <property type="evidence" value="ECO:0000315"/>
    <property type="project" value="MGI"/>
</dbReference>
<dbReference type="GO" id="GO:0035176">
    <property type="term" value="P:social behavior"/>
    <property type="evidence" value="ECO:0000315"/>
    <property type="project" value="UniProtKB"/>
</dbReference>
<dbReference type="GO" id="GO:0006366">
    <property type="term" value="P:transcription by RNA polymerase II"/>
    <property type="evidence" value="ECO:0000315"/>
    <property type="project" value="MGI"/>
</dbReference>
<dbReference type="GO" id="GO:0008542">
    <property type="term" value="P:visual learning"/>
    <property type="evidence" value="ECO:0000315"/>
    <property type="project" value="MGI"/>
</dbReference>
<dbReference type="InterPro" id="IPR020997">
    <property type="entry name" value="Ataxin-1_N"/>
</dbReference>
<dbReference type="InterPro" id="IPR043404">
    <property type="entry name" value="ATAXIN1-like"/>
</dbReference>
<dbReference type="InterPro" id="IPR003652">
    <property type="entry name" value="Ataxin_AXH_dom"/>
</dbReference>
<dbReference type="InterPro" id="IPR036096">
    <property type="entry name" value="Ataxin_AXH_dom_sf"/>
</dbReference>
<dbReference type="PANTHER" id="PTHR13392">
    <property type="entry name" value="ATAXIN 1"/>
    <property type="match status" value="1"/>
</dbReference>
<dbReference type="PANTHER" id="PTHR13392:SF5">
    <property type="entry name" value="ATAXIN-1"/>
    <property type="match status" value="1"/>
</dbReference>
<dbReference type="Pfam" id="PF12547">
    <property type="entry name" value="ATXN-1_C"/>
    <property type="match status" value="1"/>
</dbReference>
<dbReference type="Pfam" id="PF08517">
    <property type="entry name" value="AXH"/>
    <property type="match status" value="1"/>
</dbReference>
<dbReference type="SMART" id="SM00536">
    <property type="entry name" value="AXH"/>
    <property type="match status" value="1"/>
</dbReference>
<dbReference type="SUPFAM" id="SSF102031">
    <property type="entry name" value="AXH domain"/>
    <property type="match status" value="1"/>
</dbReference>
<dbReference type="PROSITE" id="PS51148">
    <property type="entry name" value="AXH"/>
    <property type="match status" value="1"/>
</dbReference>